<organism>
    <name type="scientific">Cuscuta reflexa</name>
    <name type="common">Southern Asian dodder</name>
    <dbReference type="NCBI Taxonomy" id="4129"/>
    <lineage>
        <taxon>Eukaryota</taxon>
        <taxon>Viridiplantae</taxon>
        <taxon>Streptophyta</taxon>
        <taxon>Embryophyta</taxon>
        <taxon>Tracheophyta</taxon>
        <taxon>Spermatophyta</taxon>
        <taxon>Magnoliopsida</taxon>
        <taxon>eudicotyledons</taxon>
        <taxon>Gunneridae</taxon>
        <taxon>Pentapetalae</taxon>
        <taxon>asterids</taxon>
        <taxon>lamiids</taxon>
        <taxon>Solanales</taxon>
        <taxon>Convolvulaceae</taxon>
        <taxon>Cuscuteae</taxon>
        <taxon>Cuscuta</taxon>
        <taxon>Cuscuta subgen. Monogynella</taxon>
    </lineage>
</organism>
<dbReference type="EC" id="2.7.7.6" evidence="1"/>
<dbReference type="EMBL" id="AJ439611">
    <property type="protein sequence ID" value="CAD28795.1"/>
    <property type="molecule type" value="Genomic_DNA"/>
</dbReference>
<dbReference type="EMBL" id="AM711640">
    <property type="protein sequence ID" value="CAM98423.1"/>
    <property type="molecule type" value="Genomic_DNA"/>
</dbReference>
<dbReference type="RefSeq" id="YP_001430136.1">
    <property type="nucleotide sequence ID" value="NC_009766.1"/>
</dbReference>
<dbReference type="SMR" id="Q8SKY1"/>
<dbReference type="GeneID" id="5536609"/>
<dbReference type="GO" id="GO:0000428">
    <property type="term" value="C:DNA-directed RNA polymerase complex"/>
    <property type="evidence" value="ECO:0007669"/>
    <property type="project" value="UniProtKB-KW"/>
</dbReference>
<dbReference type="GO" id="GO:0005739">
    <property type="term" value="C:mitochondrion"/>
    <property type="evidence" value="ECO:0007669"/>
    <property type="project" value="GOC"/>
</dbReference>
<dbReference type="GO" id="GO:0009536">
    <property type="term" value="C:plastid"/>
    <property type="evidence" value="ECO:0007669"/>
    <property type="project" value="UniProtKB-SubCell"/>
</dbReference>
<dbReference type="GO" id="GO:0003677">
    <property type="term" value="F:DNA binding"/>
    <property type="evidence" value="ECO:0007669"/>
    <property type="project" value="UniProtKB-UniRule"/>
</dbReference>
<dbReference type="GO" id="GO:0003899">
    <property type="term" value="F:DNA-directed RNA polymerase activity"/>
    <property type="evidence" value="ECO:0007669"/>
    <property type="project" value="UniProtKB-UniRule"/>
</dbReference>
<dbReference type="GO" id="GO:0046983">
    <property type="term" value="F:protein dimerization activity"/>
    <property type="evidence" value="ECO:0007669"/>
    <property type="project" value="InterPro"/>
</dbReference>
<dbReference type="GO" id="GO:0006351">
    <property type="term" value="P:DNA-templated transcription"/>
    <property type="evidence" value="ECO:0007669"/>
    <property type="project" value="UniProtKB-UniRule"/>
</dbReference>
<dbReference type="CDD" id="cd06928">
    <property type="entry name" value="RNAP_alpha_NTD"/>
    <property type="match status" value="1"/>
</dbReference>
<dbReference type="FunFam" id="2.170.120.12:FF:000001">
    <property type="entry name" value="DNA-directed RNA polymerase subunit alpha"/>
    <property type="match status" value="1"/>
</dbReference>
<dbReference type="Gene3D" id="1.10.150.20">
    <property type="entry name" value="5' to 3' exonuclease, C-terminal subdomain"/>
    <property type="match status" value="1"/>
</dbReference>
<dbReference type="Gene3D" id="2.170.120.12">
    <property type="entry name" value="DNA-directed RNA polymerase, insert domain"/>
    <property type="match status" value="1"/>
</dbReference>
<dbReference type="Gene3D" id="3.30.1360.10">
    <property type="entry name" value="RNA polymerase, RBP11-like subunit"/>
    <property type="match status" value="1"/>
</dbReference>
<dbReference type="HAMAP" id="MF_00059">
    <property type="entry name" value="RNApol_bact_RpoA"/>
    <property type="match status" value="1"/>
</dbReference>
<dbReference type="InterPro" id="IPR011262">
    <property type="entry name" value="DNA-dir_RNA_pol_insert"/>
</dbReference>
<dbReference type="InterPro" id="IPR011263">
    <property type="entry name" value="DNA-dir_RNA_pol_RpoA/D/Rpb3"/>
</dbReference>
<dbReference type="InterPro" id="IPR011773">
    <property type="entry name" value="DNA-dir_RpoA"/>
</dbReference>
<dbReference type="InterPro" id="IPR036603">
    <property type="entry name" value="RBP11-like"/>
</dbReference>
<dbReference type="InterPro" id="IPR011260">
    <property type="entry name" value="RNAP_asu_C"/>
</dbReference>
<dbReference type="InterPro" id="IPR036643">
    <property type="entry name" value="RNApol_insert_sf"/>
</dbReference>
<dbReference type="NCBIfam" id="TIGR02027">
    <property type="entry name" value="rpoA"/>
    <property type="match status" value="1"/>
</dbReference>
<dbReference type="Pfam" id="PF01000">
    <property type="entry name" value="RNA_pol_A_bac"/>
    <property type="match status" value="1"/>
</dbReference>
<dbReference type="Pfam" id="PF03118">
    <property type="entry name" value="RNA_pol_A_CTD"/>
    <property type="match status" value="1"/>
</dbReference>
<dbReference type="Pfam" id="PF01193">
    <property type="entry name" value="RNA_pol_L"/>
    <property type="match status" value="1"/>
</dbReference>
<dbReference type="SMART" id="SM00662">
    <property type="entry name" value="RPOLD"/>
    <property type="match status" value="1"/>
</dbReference>
<dbReference type="SUPFAM" id="SSF47789">
    <property type="entry name" value="C-terminal domain of RNA polymerase alpha subunit"/>
    <property type="match status" value="1"/>
</dbReference>
<dbReference type="SUPFAM" id="SSF56553">
    <property type="entry name" value="Insert subdomain of RNA polymerase alpha subunit"/>
    <property type="match status" value="1"/>
</dbReference>
<dbReference type="SUPFAM" id="SSF55257">
    <property type="entry name" value="RBP11-like subunits of RNA polymerase"/>
    <property type="match status" value="1"/>
</dbReference>
<comment type="function">
    <text evidence="1">DNA-dependent RNA polymerase catalyzes the transcription of DNA into RNA using the four ribonucleoside triphosphates as substrates.</text>
</comment>
<comment type="catalytic activity">
    <reaction evidence="1">
        <text>RNA(n) + a ribonucleoside 5'-triphosphate = RNA(n+1) + diphosphate</text>
        <dbReference type="Rhea" id="RHEA:21248"/>
        <dbReference type="Rhea" id="RHEA-COMP:14527"/>
        <dbReference type="Rhea" id="RHEA-COMP:17342"/>
        <dbReference type="ChEBI" id="CHEBI:33019"/>
        <dbReference type="ChEBI" id="CHEBI:61557"/>
        <dbReference type="ChEBI" id="CHEBI:140395"/>
        <dbReference type="EC" id="2.7.7.6"/>
    </reaction>
</comment>
<comment type="subunit">
    <text evidence="1">In plastids the minimal PEP RNA polymerase catalytic core is composed of four subunits: alpha, beta, beta', and beta''. When a (nuclear-encoded) sigma factor is associated with the core the holoenzyme is formed, which can initiate transcription.</text>
</comment>
<comment type="subcellular location">
    <subcellularLocation>
        <location>Plastid</location>
    </subcellularLocation>
</comment>
<comment type="domain">
    <text evidence="1">The N-terminal domain is essential for RNAP assembly and basal transcription, whereas the C-terminal domain is involved in interaction with transcriptional regulators and with upstream promoter elements.</text>
</comment>
<comment type="similarity">
    <text evidence="1">Belongs to the RNA polymerase alpha chain family.</text>
</comment>
<comment type="caution">
    <text evidence="2">Young tissue from this organism is photosynthetic and contains some thylakoids, although the photosynthetic activity does not exceed the light compensation point.</text>
</comment>
<name>RPOA_CUSRE</name>
<feature type="chain" id="PRO_0000175449" description="DNA-directed RNA polymerase subunit alpha">
    <location>
        <begin position="1"/>
        <end position="335"/>
    </location>
</feature>
<feature type="region of interest" description="Alpha N-terminal domain (alpha-NTD)" evidence="1">
    <location>
        <begin position="1"/>
        <end position="231"/>
    </location>
</feature>
<feature type="region of interest" description="Alpha C-terminal domain (alpha-CTD)" evidence="1">
    <location>
        <begin position="262"/>
        <end position="335"/>
    </location>
</feature>
<feature type="sequence conflict" description="In Ref. 1; CAD28795." evidence="2" ref="1">
    <original>L</original>
    <variation>P</variation>
    <location>
        <position position="27"/>
    </location>
</feature>
<feature type="sequence conflict" description="In Ref. 1; CAD28795." evidence="2" ref="1">
    <original>F</original>
    <variation>L</variation>
    <location>
        <position position="176"/>
    </location>
</feature>
<feature type="sequence conflict" description="In Ref. 1; CAD28795." evidence="2" ref="1">
    <original>L</original>
    <variation>S</variation>
    <location>
        <position position="330"/>
    </location>
</feature>
<reference key="1">
    <citation type="thesis" date="2002" institute="Christian-Albrechts University" country="Germany">
        <title>Sequence analysis and coding potential of the holoparasitic flowering plant genus Cuscuta.</title>
        <authorList>
            <person name="Berg S."/>
        </authorList>
    </citation>
    <scope>NUCLEOTIDE SEQUENCE [GENOMIC DNA]</scope>
</reference>
<reference key="2">
    <citation type="journal article" date="2007" name="BMC Plant Biol.">
        <title>Complete DNA sequences of the plastid genomes of two parasitic flowering plant species, Cuscuta reflexa and Cuscuta gronovii.</title>
        <authorList>
            <person name="Funk H.T."/>
            <person name="Berg S."/>
            <person name="Krupinska K."/>
            <person name="Maier U.-G."/>
            <person name="Krause K."/>
        </authorList>
    </citation>
    <scope>NUCLEOTIDE SEQUENCE [LARGE SCALE GENOMIC DNA]</scope>
</reference>
<gene>
    <name evidence="1" type="primary">rpoA</name>
</gene>
<proteinExistence type="inferred from homology"/>
<protein>
    <recommendedName>
        <fullName evidence="1">DNA-directed RNA polymerase subunit alpha</fullName>
        <shortName evidence="1">PEP</shortName>
        <ecNumber evidence="1">2.7.7.6</ecNumber>
    </recommendedName>
    <alternativeName>
        <fullName evidence="1">Plastid-encoded RNA polymerase subunit alpha</fullName>
        <shortName evidence="1">RNA polymerase subunit alpha</shortName>
    </alternativeName>
</protein>
<accession>Q8SKY1</accession>
<accession>A7M995</accession>
<keyword id="KW-0240">DNA-directed RNA polymerase</keyword>
<keyword id="KW-0548">Nucleotidyltransferase</keyword>
<keyword id="KW-0934">Plastid</keyword>
<keyword id="KW-0804">Transcription</keyword>
<keyword id="KW-0808">Transferase</keyword>
<sequence length="335" mass="38382">MVREKVTVSTRTLQWKCVESRTDSKRLYYGRFILSPLTKGQADTIGIAMRRALLAEIEGTRITRVKFANTSHEYSTIAGIQESVHEILMNLKEIVLRSNLYGTCDASISIKGPGYVTAEDIILPPHVEIVDSTQHIAWLTEPINFFIGLKIERNHGYFIKTHANFEDGSYPIDALFMPVRNANHSINSYGNEKQEILFLEIWTNGSLTPKEALHEASRNLIDLFIPFLHMEEENLHLEDADHTIPLSPFTVYDKVAKLRKNKKKLSLESIFIDQLEFPPKIYNCLKKSNIFTLLDLLNNSQEDLIKIEHFHLEDVKQILGILGKHFALDLPKNLN</sequence>
<geneLocation type="plastid"/>
<evidence type="ECO:0000255" key="1">
    <source>
        <dbReference type="HAMAP-Rule" id="MF_00059"/>
    </source>
</evidence>
<evidence type="ECO:0000305" key="2"/>